<feature type="chain" id="PRO_0000255122" description="Cytochrome b">
    <location>
        <begin position="1"/>
        <end position="379"/>
    </location>
</feature>
<feature type="transmembrane region" description="Helical" evidence="2">
    <location>
        <begin position="33"/>
        <end position="53"/>
    </location>
</feature>
<feature type="transmembrane region" description="Helical" evidence="2">
    <location>
        <begin position="77"/>
        <end position="98"/>
    </location>
</feature>
<feature type="transmembrane region" description="Helical" evidence="2">
    <location>
        <begin position="113"/>
        <end position="133"/>
    </location>
</feature>
<feature type="transmembrane region" description="Helical" evidence="2">
    <location>
        <begin position="178"/>
        <end position="198"/>
    </location>
</feature>
<feature type="transmembrane region" description="Helical" evidence="2">
    <location>
        <begin position="226"/>
        <end position="246"/>
    </location>
</feature>
<feature type="transmembrane region" description="Helical" evidence="2">
    <location>
        <begin position="288"/>
        <end position="308"/>
    </location>
</feature>
<feature type="transmembrane region" description="Helical" evidence="2">
    <location>
        <begin position="320"/>
        <end position="340"/>
    </location>
</feature>
<feature type="transmembrane region" description="Helical" evidence="2">
    <location>
        <begin position="347"/>
        <end position="367"/>
    </location>
</feature>
<feature type="binding site" description="axial binding residue" evidence="2">
    <location>
        <position position="83"/>
    </location>
    <ligand>
        <name>heme b</name>
        <dbReference type="ChEBI" id="CHEBI:60344"/>
        <label>b562</label>
    </ligand>
    <ligandPart>
        <name>Fe</name>
        <dbReference type="ChEBI" id="CHEBI:18248"/>
    </ligandPart>
</feature>
<feature type="binding site" description="axial binding residue" evidence="2">
    <location>
        <position position="97"/>
    </location>
    <ligand>
        <name>heme b</name>
        <dbReference type="ChEBI" id="CHEBI:60344"/>
        <label>b566</label>
    </ligand>
    <ligandPart>
        <name>Fe</name>
        <dbReference type="ChEBI" id="CHEBI:18248"/>
    </ligandPart>
</feature>
<feature type="binding site" description="axial binding residue" evidence="2">
    <location>
        <position position="182"/>
    </location>
    <ligand>
        <name>heme b</name>
        <dbReference type="ChEBI" id="CHEBI:60344"/>
        <label>b562</label>
    </ligand>
    <ligandPart>
        <name>Fe</name>
        <dbReference type="ChEBI" id="CHEBI:18248"/>
    </ligandPart>
</feature>
<feature type="binding site" description="axial binding residue" evidence="2">
    <location>
        <position position="196"/>
    </location>
    <ligand>
        <name>heme b</name>
        <dbReference type="ChEBI" id="CHEBI:60344"/>
        <label>b566</label>
    </ligand>
    <ligandPart>
        <name>Fe</name>
        <dbReference type="ChEBI" id="CHEBI:18248"/>
    </ligandPart>
</feature>
<feature type="binding site" evidence="2">
    <location>
        <position position="201"/>
    </location>
    <ligand>
        <name>a ubiquinone</name>
        <dbReference type="ChEBI" id="CHEBI:16389"/>
    </ligand>
</feature>
<gene>
    <name type="primary">MT-CYB</name>
    <name type="synonym">COB</name>
    <name type="synonym">CYTB</name>
    <name type="synonym">MTCYB</name>
</gene>
<proteinExistence type="inferred from homology"/>
<dbReference type="EMBL" id="U35413">
    <property type="protein sequence ID" value="AAC52548.1"/>
    <property type="molecule type" value="Genomic_DNA"/>
</dbReference>
<dbReference type="SMR" id="Q35350"/>
<dbReference type="GO" id="GO:0005743">
    <property type="term" value="C:mitochondrial inner membrane"/>
    <property type="evidence" value="ECO:0007669"/>
    <property type="project" value="UniProtKB-SubCell"/>
</dbReference>
<dbReference type="GO" id="GO:0045275">
    <property type="term" value="C:respiratory chain complex III"/>
    <property type="evidence" value="ECO:0007669"/>
    <property type="project" value="InterPro"/>
</dbReference>
<dbReference type="GO" id="GO:0046872">
    <property type="term" value="F:metal ion binding"/>
    <property type="evidence" value="ECO:0007669"/>
    <property type="project" value="UniProtKB-KW"/>
</dbReference>
<dbReference type="GO" id="GO:0008121">
    <property type="term" value="F:ubiquinol-cytochrome-c reductase activity"/>
    <property type="evidence" value="ECO:0007669"/>
    <property type="project" value="InterPro"/>
</dbReference>
<dbReference type="GO" id="GO:0006122">
    <property type="term" value="P:mitochondrial electron transport, ubiquinol to cytochrome c"/>
    <property type="evidence" value="ECO:0007669"/>
    <property type="project" value="TreeGrafter"/>
</dbReference>
<dbReference type="CDD" id="cd00290">
    <property type="entry name" value="cytochrome_b_C"/>
    <property type="match status" value="1"/>
</dbReference>
<dbReference type="CDD" id="cd00284">
    <property type="entry name" value="Cytochrome_b_N"/>
    <property type="match status" value="1"/>
</dbReference>
<dbReference type="FunFam" id="1.20.810.10:FF:000002">
    <property type="entry name" value="Cytochrome b"/>
    <property type="match status" value="1"/>
</dbReference>
<dbReference type="Gene3D" id="1.20.810.10">
    <property type="entry name" value="Cytochrome Bc1 Complex, Chain C"/>
    <property type="match status" value="1"/>
</dbReference>
<dbReference type="InterPro" id="IPR005798">
    <property type="entry name" value="Cyt_b/b6_C"/>
</dbReference>
<dbReference type="InterPro" id="IPR036150">
    <property type="entry name" value="Cyt_b/b6_C_sf"/>
</dbReference>
<dbReference type="InterPro" id="IPR005797">
    <property type="entry name" value="Cyt_b/b6_N"/>
</dbReference>
<dbReference type="InterPro" id="IPR027387">
    <property type="entry name" value="Cytb/b6-like_sf"/>
</dbReference>
<dbReference type="InterPro" id="IPR030689">
    <property type="entry name" value="Cytochrome_b"/>
</dbReference>
<dbReference type="InterPro" id="IPR048260">
    <property type="entry name" value="Cytochrome_b_C_euk/bac"/>
</dbReference>
<dbReference type="InterPro" id="IPR048259">
    <property type="entry name" value="Cytochrome_b_N_euk/bac"/>
</dbReference>
<dbReference type="InterPro" id="IPR016174">
    <property type="entry name" value="Di-haem_cyt_TM"/>
</dbReference>
<dbReference type="PANTHER" id="PTHR19271">
    <property type="entry name" value="CYTOCHROME B"/>
    <property type="match status" value="1"/>
</dbReference>
<dbReference type="PANTHER" id="PTHR19271:SF16">
    <property type="entry name" value="CYTOCHROME B"/>
    <property type="match status" value="1"/>
</dbReference>
<dbReference type="Pfam" id="PF00032">
    <property type="entry name" value="Cytochrom_B_C"/>
    <property type="match status" value="1"/>
</dbReference>
<dbReference type="Pfam" id="PF00033">
    <property type="entry name" value="Cytochrome_B"/>
    <property type="match status" value="1"/>
</dbReference>
<dbReference type="PIRSF" id="PIRSF038885">
    <property type="entry name" value="COB"/>
    <property type="match status" value="1"/>
</dbReference>
<dbReference type="SUPFAM" id="SSF81648">
    <property type="entry name" value="a domain/subunit of cytochrome bc1 complex (Ubiquinol-cytochrome c reductase)"/>
    <property type="match status" value="1"/>
</dbReference>
<dbReference type="SUPFAM" id="SSF81342">
    <property type="entry name" value="Transmembrane di-heme cytochromes"/>
    <property type="match status" value="1"/>
</dbReference>
<dbReference type="PROSITE" id="PS51003">
    <property type="entry name" value="CYTB_CTER"/>
    <property type="match status" value="1"/>
</dbReference>
<dbReference type="PROSITE" id="PS51002">
    <property type="entry name" value="CYTB_NTER"/>
    <property type="match status" value="1"/>
</dbReference>
<organism>
    <name type="scientific">Proechimys quadruplicatus</name>
    <name type="common">Napo spiny rat</name>
    <name type="synonym">Proechimys amphichoricus</name>
    <dbReference type="NCBI Taxonomy" id="167953"/>
    <lineage>
        <taxon>Eukaryota</taxon>
        <taxon>Metazoa</taxon>
        <taxon>Chordata</taxon>
        <taxon>Craniata</taxon>
        <taxon>Vertebrata</taxon>
        <taxon>Euteleostomi</taxon>
        <taxon>Mammalia</taxon>
        <taxon>Eutheria</taxon>
        <taxon>Euarchontoglires</taxon>
        <taxon>Glires</taxon>
        <taxon>Rodentia</taxon>
        <taxon>Hystricomorpha</taxon>
        <taxon>Echimyidae</taxon>
        <taxon>Proechimys</taxon>
    </lineage>
</organism>
<evidence type="ECO:0000250" key="1"/>
<evidence type="ECO:0000250" key="2">
    <source>
        <dbReference type="UniProtKB" id="P00157"/>
    </source>
</evidence>
<evidence type="ECO:0000255" key="3">
    <source>
        <dbReference type="PROSITE-ProRule" id="PRU00967"/>
    </source>
</evidence>
<evidence type="ECO:0000255" key="4">
    <source>
        <dbReference type="PROSITE-ProRule" id="PRU00968"/>
    </source>
</evidence>
<name>CYB_PROQA</name>
<reference key="1">
    <citation type="journal article" date="1996" name="Mol. Phylogenet. Evol.">
        <title>The simultaneous diversification of South American echimyid rodents (Hystricognathi) based on complete cytochrome b sequences.</title>
        <authorList>
            <person name="Lara M.C."/>
            <person name="Patton J.L."/>
            <person name="da Silva M.N.F."/>
        </authorList>
    </citation>
    <scope>NUCLEOTIDE SEQUENCE [GENOMIC DNA]</scope>
</reference>
<protein>
    <recommendedName>
        <fullName>Cytochrome b</fullName>
    </recommendedName>
    <alternativeName>
        <fullName>Complex III subunit 3</fullName>
    </alternativeName>
    <alternativeName>
        <fullName>Complex III subunit III</fullName>
    </alternativeName>
    <alternativeName>
        <fullName>Cytochrome b-c1 complex subunit 3</fullName>
    </alternativeName>
    <alternativeName>
        <fullName>Ubiquinol-cytochrome-c reductase complex cytochrome b subunit</fullName>
    </alternativeName>
</protein>
<sequence>MTNLRKSHPLIKIINHSFIDLPTPSNISAWWNFGSLLGACLIIQIITGLLLAMHYTADTTTAFSSVTHICRDVNYGWLIRYAHANGASMFFIFLYFHIGRGVYYGSYTFTETWNIGVILLFTVMATAFMGYVLPWGQMSFWGATVITNLLSAIPYIGPTLVEWIWGGFSVDKATLTRFFAFHFVLPFIITAMVMIHLLFLHETGSNNPSGLNSNSDKIPFHPYYTIKDISGLLFMLMTLMTLILFSPDLLGDPDNYTPANPLNTPPHIKPEWYFLFAYAILRSIPNKLGGVLALVFSILILMLFPMLHMSKQRSMTFRPLSQCLLWILVSTLIILTWIGGQPVEYPFIKIGQLASIFYFCIILILMPTTSLMENKLLKW</sequence>
<geneLocation type="mitochondrion"/>
<accession>Q35350</accession>
<comment type="function">
    <text evidence="2">Component of the ubiquinol-cytochrome c reductase complex (complex III or cytochrome b-c1 complex) that is part of the mitochondrial respiratory chain. The b-c1 complex mediates electron transfer from ubiquinol to cytochrome c. Contributes to the generation of a proton gradient across the mitochondrial membrane that is then used for ATP synthesis.</text>
</comment>
<comment type="cofactor">
    <cofactor evidence="2">
        <name>heme b</name>
        <dbReference type="ChEBI" id="CHEBI:60344"/>
    </cofactor>
    <text evidence="2">Binds 2 heme b groups non-covalently.</text>
</comment>
<comment type="subunit">
    <text evidence="2">The cytochrome bc1 complex contains 11 subunits: 3 respiratory subunits (MT-CYB, CYC1 and UQCRFS1), 2 core proteins (UQCRC1 and UQCRC2) and 6 low-molecular weight proteins (UQCRH/QCR6, UQCRB/QCR7, UQCRQ/QCR8, UQCR10/QCR9, UQCR11/QCR10 and a cleavage product of UQCRFS1). This cytochrome bc1 complex then forms a dimer.</text>
</comment>
<comment type="subcellular location">
    <subcellularLocation>
        <location evidence="2">Mitochondrion inner membrane</location>
        <topology evidence="2">Multi-pass membrane protein</topology>
    </subcellularLocation>
</comment>
<comment type="miscellaneous">
    <text evidence="1">Heme 1 (or BL or b562) is low-potential and absorbs at about 562 nm, and heme 2 (or BH or b566) is high-potential and absorbs at about 566 nm.</text>
</comment>
<comment type="similarity">
    <text evidence="3 4">Belongs to the cytochrome b family.</text>
</comment>
<comment type="caution">
    <text evidence="2">The full-length protein contains only eight transmembrane helices, not nine as predicted by bioinformatics tools.</text>
</comment>
<keyword id="KW-0249">Electron transport</keyword>
<keyword id="KW-0349">Heme</keyword>
<keyword id="KW-0408">Iron</keyword>
<keyword id="KW-0472">Membrane</keyword>
<keyword id="KW-0479">Metal-binding</keyword>
<keyword id="KW-0496">Mitochondrion</keyword>
<keyword id="KW-0999">Mitochondrion inner membrane</keyword>
<keyword id="KW-0679">Respiratory chain</keyword>
<keyword id="KW-0812">Transmembrane</keyword>
<keyword id="KW-1133">Transmembrane helix</keyword>
<keyword id="KW-0813">Transport</keyword>
<keyword id="KW-0830">Ubiquinone</keyword>